<protein>
    <recommendedName>
        <fullName evidence="1">NAD(P)H-quinone oxidoreductase subunit 2 B, chloroplastic</fullName>
        <ecNumber evidence="1">7.1.1.-</ecNumber>
    </recommendedName>
    <alternativeName>
        <fullName evidence="1">NAD(P)H dehydrogenase, subunit 2 B</fullName>
    </alternativeName>
    <alternativeName>
        <fullName evidence="1">NADH-plastoquinone oxidoreductase subunit 2 B</fullName>
    </alternativeName>
</protein>
<dbReference type="EC" id="7.1.1.-" evidence="1"/>
<dbReference type="EMBL" id="AP002983">
    <property type="protein sequence ID" value="BAB33255.1"/>
    <property type="status" value="ALT_SEQ"/>
    <property type="molecule type" value="Genomic_DNA"/>
</dbReference>
<dbReference type="SMR" id="P0CC89"/>
<dbReference type="GO" id="GO:0009535">
    <property type="term" value="C:chloroplast thylakoid membrane"/>
    <property type="evidence" value="ECO:0007669"/>
    <property type="project" value="UniProtKB-SubCell"/>
</dbReference>
<dbReference type="GO" id="GO:0008137">
    <property type="term" value="F:NADH dehydrogenase (ubiquinone) activity"/>
    <property type="evidence" value="ECO:0007669"/>
    <property type="project" value="InterPro"/>
</dbReference>
<dbReference type="GO" id="GO:0048038">
    <property type="term" value="F:quinone binding"/>
    <property type="evidence" value="ECO:0007669"/>
    <property type="project" value="UniProtKB-KW"/>
</dbReference>
<dbReference type="GO" id="GO:0042773">
    <property type="term" value="P:ATP synthesis coupled electron transport"/>
    <property type="evidence" value="ECO:0007669"/>
    <property type="project" value="InterPro"/>
</dbReference>
<dbReference type="GO" id="GO:0019684">
    <property type="term" value="P:photosynthesis, light reaction"/>
    <property type="evidence" value="ECO:0007669"/>
    <property type="project" value="UniProtKB-UniRule"/>
</dbReference>
<dbReference type="HAMAP" id="MF_00445">
    <property type="entry name" value="NDH1_NuoN_1"/>
    <property type="match status" value="1"/>
</dbReference>
<dbReference type="InterPro" id="IPR010096">
    <property type="entry name" value="NADH-Q_OxRdtase_suN/2"/>
</dbReference>
<dbReference type="InterPro" id="IPR001750">
    <property type="entry name" value="ND/Mrp_TM"/>
</dbReference>
<dbReference type="InterPro" id="IPR045693">
    <property type="entry name" value="Ndh2_N"/>
</dbReference>
<dbReference type="NCBIfam" id="TIGR01770">
    <property type="entry name" value="NDH_I_N"/>
    <property type="match status" value="1"/>
</dbReference>
<dbReference type="NCBIfam" id="NF002701">
    <property type="entry name" value="PRK02504.1"/>
    <property type="match status" value="1"/>
</dbReference>
<dbReference type="PANTHER" id="PTHR22773">
    <property type="entry name" value="NADH DEHYDROGENASE"/>
    <property type="match status" value="1"/>
</dbReference>
<dbReference type="Pfam" id="PF19530">
    <property type="entry name" value="Ndh2_N"/>
    <property type="match status" value="1"/>
</dbReference>
<dbReference type="Pfam" id="PF00361">
    <property type="entry name" value="Proton_antipo_M"/>
    <property type="match status" value="1"/>
</dbReference>
<gene>
    <name evidence="1" type="primary">ndhB2</name>
</gene>
<evidence type="ECO:0000255" key="1">
    <source>
        <dbReference type="HAMAP-Rule" id="MF_00445"/>
    </source>
</evidence>
<evidence type="ECO:0000305" key="2"/>
<name>NU2C2_LOTJA</name>
<geneLocation type="chloroplast"/>
<keyword id="KW-0150">Chloroplast</keyword>
<keyword id="KW-0472">Membrane</keyword>
<keyword id="KW-0520">NAD</keyword>
<keyword id="KW-0521">NADP</keyword>
<keyword id="KW-0934">Plastid</keyword>
<keyword id="KW-0618">Plastoquinone</keyword>
<keyword id="KW-0874">Quinone</keyword>
<keyword id="KW-0793">Thylakoid</keyword>
<keyword id="KW-1278">Translocase</keyword>
<keyword id="KW-0812">Transmembrane</keyword>
<keyword id="KW-1133">Transmembrane helix</keyword>
<keyword id="KW-0813">Transport</keyword>
<sequence length="510" mass="56705">MIWHVQNENLILDSTRIFMKAFHLLLFDGSFIFPECILIFGLILLLMIDSTSDQKDISWFYFISSTSLVMSIVVLLFRWREEPMISFSGNFQTNNFNEIFQFLILLSSTLCIPLSVEYIECTEMAITEFLLFVLTATLGGMFLCSANDLITIFVAPECFSLCSYLLSGYTKKDVRSNEATMKYLLMGGASSSILVHGFSWLYGSSGGEIELQEIVNGLINTQMYNSPGISIALIFITVGIGFKLSLAPSHQWTPDVYEGSPTPVVAFLSVTSKVAASALATRIFDIPFYFSSNEWHLLLEILAILSMILGNLIAITQTSMKRMLAYSSIGQIGYVIIGIIVGDSNGGYASMITYMLFYISMNLGTFACIVSFGLRTGTDNIRDYAGLYTKDPFLALSLALCLLSLGGLPPLAGFFGKLYLFWCGWQAGLYFLVSIGLLMSVVSIYYYLKIIKLLMTGRNQEITPHVRNYKRSPLRSNNSIELSMIVCVIASTISGISMNPIIEIAQDTLF</sequence>
<organism>
    <name type="scientific">Lotus japonicus</name>
    <name type="common">Lotus corniculatus var. japonicus</name>
    <dbReference type="NCBI Taxonomy" id="34305"/>
    <lineage>
        <taxon>Eukaryota</taxon>
        <taxon>Viridiplantae</taxon>
        <taxon>Streptophyta</taxon>
        <taxon>Embryophyta</taxon>
        <taxon>Tracheophyta</taxon>
        <taxon>Spermatophyta</taxon>
        <taxon>Magnoliopsida</taxon>
        <taxon>eudicotyledons</taxon>
        <taxon>Gunneridae</taxon>
        <taxon>Pentapetalae</taxon>
        <taxon>rosids</taxon>
        <taxon>fabids</taxon>
        <taxon>Fabales</taxon>
        <taxon>Fabaceae</taxon>
        <taxon>Papilionoideae</taxon>
        <taxon>50 kb inversion clade</taxon>
        <taxon>NPAAA clade</taxon>
        <taxon>Hologalegina</taxon>
        <taxon>robinioid clade</taxon>
        <taxon>Loteae</taxon>
        <taxon>Lotus</taxon>
    </lineage>
</organism>
<feature type="chain" id="PRO_0000391282" description="NAD(P)H-quinone oxidoreductase subunit 2 B, chloroplastic">
    <location>
        <begin position="1"/>
        <end position="510"/>
    </location>
</feature>
<feature type="transmembrane region" description="Helical" evidence="1">
    <location>
        <begin position="24"/>
        <end position="44"/>
    </location>
</feature>
<feature type="transmembrane region" description="Helical" evidence="1">
    <location>
        <begin position="57"/>
        <end position="77"/>
    </location>
</feature>
<feature type="transmembrane region" description="Helical" evidence="1">
    <location>
        <begin position="99"/>
        <end position="119"/>
    </location>
</feature>
<feature type="transmembrane region" description="Helical" evidence="1">
    <location>
        <begin position="124"/>
        <end position="144"/>
    </location>
</feature>
<feature type="transmembrane region" description="Helical" evidence="1">
    <location>
        <begin position="149"/>
        <end position="169"/>
    </location>
</feature>
<feature type="transmembrane region" description="Helical" evidence="1">
    <location>
        <begin position="183"/>
        <end position="203"/>
    </location>
</feature>
<feature type="transmembrane region" description="Helical" evidence="1">
    <location>
        <begin position="227"/>
        <end position="247"/>
    </location>
</feature>
<feature type="transmembrane region" description="Helical" evidence="1">
    <location>
        <begin position="295"/>
        <end position="315"/>
    </location>
</feature>
<feature type="transmembrane region" description="Helical" evidence="1">
    <location>
        <begin position="323"/>
        <end position="343"/>
    </location>
</feature>
<feature type="transmembrane region" description="Helical" evidence="1">
    <location>
        <begin position="354"/>
        <end position="374"/>
    </location>
</feature>
<feature type="transmembrane region" description="Helical" evidence="1">
    <location>
        <begin position="395"/>
        <end position="415"/>
    </location>
</feature>
<feature type="transmembrane region" description="Helical" evidence="1">
    <location>
        <begin position="418"/>
        <end position="438"/>
    </location>
</feature>
<feature type="transmembrane region" description="Helical" evidence="1">
    <location>
        <begin position="482"/>
        <end position="502"/>
    </location>
</feature>
<comment type="function">
    <text evidence="1">NDH shuttles electrons from NAD(P)H:plastoquinone, via FMN and iron-sulfur (Fe-S) centers, to quinones in the photosynthetic chain and possibly in a chloroplast respiratory chain. The immediate electron acceptor for the enzyme in this species is believed to be plastoquinone. Couples the redox reaction to proton translocation, and thus conserves the redox energy in a proton gradient.</text>
</comment>
<comment type="catalytic activity">
    <reaction evidence="1">
        <text>a plastoquinone + NADH + (n+1) H(+)(in) = a plastoquinol + NAD(+) + n H(+)(out)</text>
        <dbReference type="Rhea" id="RHEA:42608"/>
        <dbReference type="Rhea" id="RHEA-COMP:9561"/>
        <dbReference type="Rhea" id="RHEA-COMP:9562"/>
        <dbReference type="ChEBI" id="CHEBI:15378"/>
        <dbReference type="ChEBI" id="CHEBI:17757"/>
        <dbReference type="ChEBI" id="CHEBI:57540"/>
        <dbReference type="ChEBI" id="CHEBI:57945"/>
        <dbReference type="ChEBI" id="CHEBI:62192"/>
    </reaction>
</comment>
<comment type="catalytic activity">
    <reaction evidence="1">
        <text>a plastoquinone + NADPH + (n+1) H(+)(in) = a plastoquinol + NADP(+) + n H(+)(out)</text>
        <dbReference type="Rhea" id="RHEA:42612"/>
        <dbReference type="Rhea" id="RHEA-COMP:9561"/>
        <dbReference type="Rhea" id="RHEA-COMP:9562"/>
        <dbReference type="ChEBI" id="CHEBI:15378"/>
        <dbReference type="ChEBI" id="CHEBI:17757"/>
        <dbReference type="ChEBI" id="CHEBI:57783"/>
        <dbReference type="ChEBI" id="CHEBI:58349"/>
        <dbReference type="ChEBI" id="CHEBI:62192"/>
    </reaction>
</comment>
<comment type="subunit">
    <text evidence="1">NDH is composed of at least 16 different subunits, 5 of which are encoded in the nucleus.</text>
</comment>
<comment type="subcellular location">
    <subcellularLocation>
        <location evidence="1">Plastid</location>
        <location evidence="1">Chloroplast thylakoid membrane</location>
        <topology evidence="1">Multi-pass membrane protein</topology>
    </subcellularLocation>
</comment>
<comment type="similarity">
    <text evidence="1">Belongs to the complex I subunit 2 family.</text>
</comment>
<comment type="sequence caution" evidence="2">
    <conflict type="erroneous termination">
        <sequence resource="EMBL-CDS" id="BAB33255"/>
    </conflict>
    <text>Truncated C-terminus.</text>
</comment>
<reference key="1">
    <citation type="journal article" date="2000" name="DNA Res.">
        <title>Complete structure of the chloroplast genome of a legume, Lotus japonicus.</title>
        <authorList>
            <person name="Kato T."/>
            <person name="Kaneko T."/>
            <person name="Sato S."/>
            <person name="Nakamura Y."/>
            <person name="Tabata S."/>
        </authorList>
    </citation>
    <scope>NUCLEOTIDE SEQUENCE [LARGE SCALE GENOMIC DNA]</scope>
    <source>
        <strain>cv. Miyakojima MG-20</strain>
    </source>
</reference>
<accession>P0CC89</accession>
<accession>Q9B149</accession>
<proteinExistence type="inferred from homology"/>